<proteinExistence type="inferred from homology"/>
<reference key="1">
    <citation type="journal article" date="2009" name="PLoS ONE">
        <title>The complete genome of Teredinibacter turnerae T7901: an intracellular endosymbiont of marine wood-boring bivalves (shipworms).</title>
        <authorList>
            <person name="Yang J.C."/>
            <person name="Madupu R."/>
            <person name="Durkin A.S."/>
            <person name="Ekborg N.A."/>
            <person name="Pedamallu C.S."/>
            <person name="Hostetler J.B."/>
            <person name="Radune D."/>
            <person name="Toms B.S."/>
            <person name="Henrissat B."/>
            <person name="Coutinho P.M."/>
            <person name="Schwarz S."/>
            <person name="Field L."/>
            <person name="Trindade-Silva A.E."/>
            <person name="Soares C.A.G."/>
            <person name="Elshahawi S."/>
            <person name="Hanora A."/>
            <person name="Schmidt E.W."/>
            <person name="Haygood M.G."/>
            <person name="Posfai J."/>
            <person name="Benner J."/>
            <person name="Madinger C."/>
            <person name="Nove J."/>
            <person name="Anton B."/>
            <person name="Chaudhary K."/>
            <person name="Foster J."/>
            <person name="Holman A."/>
            <person name="Kumar S."/>
            <person name="Lessard P.A."/>
            <person name="Luyten Y.A."/>
            <person name="Slatko B."/>
            <person name="Wood N."/>
            <person name="Wu B."/>
            <person name="Teplitski M."/>
            <person name="Mougous J.D."/>
            <person name="Ward N."/>
            <person name="Eisen J.A."/>
            <person name="Badger J.H."/>
            <person name="Distel D.L."/>
        </authorList>
    </citation>
    <scope>NUCLEOTIDE SEQUENCE [LARGE SCALE GENOMIC DNA]</scope>
    <source>
        <strain>ATCC 39867 / T7901</strain>
    </source>
</reference>
<protein>
    <recommendedName>
        <fullName evidence="1">Urease subunit alpha</fullName>
        <ecNumber evidence="1">3.5.1.5</ecNumber>
    </recommendedName>
    <alternativeName>
        <fullName evidence="1">Urea amidohydrolase subunit alpha</fullName>
    </alternativeName>
</protein>
<organism>
    <name type="scientific">Teredinibacter turnerae (strain ATCC 39867 / T7901)</name>
    <dbReference type="NCBI Taxonomy" id="377629"/>
    <lineage>
        <taxon>Bacteria</taxon>
        <taxon>Pseudomonadati</taxon>
        <taxon>Pseudomonadota</taxon>
        <taxon>Gammaproteobacteria</taxon>
        <taxon>Cellvibrionales</taxon>
        <taxon>Cellvibrionaceae</taxon>
        <taxon>Teredinibacter</taxon>
    </lineage>
</organism>
<dbReference type="EC" id="3.5.1.5" evidence="1"/>
<dbReference type="EMBL" id="CP001614">
    <property type="protein sequence ID" value="ACR12511.1"/>
    <property type="molecule type" value="Genomic_DNA"/>
</dbReference>
<dbReference type="RefSeq" id="WP_015818623.1">
    <property type="nucleotide sequence ID" value="NC_012997.1"/>
</dbReference>
<dbReference type="SMR" id="C5BUN9"/>
<dbReference type="STRING" id="377629.TERTU_4206"/>
<dbReference type="KEGG" id="ttu:TERTU_4206"/>
<dbReference type="eggNOG" id="COG0804">
    <property type="taxonomic scope" value="Bacteria"/>
</dbReference>
<dbReference type="HOGENOM" id="CLU_000980_0_0_6"/>
<dbReference type="OrthoDB" id="9802793at2"/>
<dbReference type="UniPathway" id="UPA00258">
    <property type="reaction ID" value="UER00370"/>
</dbReference>
<dbReference type="Proteomes" id="UP000009080">
    <property type="component" value="Chromosome"/>
</dbReference>
<dbReference type="GO" id="GO:0005737">
    <property type="term" value="C:cytoplasm"/>
    <property type="evidence" value="ECO:0007669"/>
    <property type="project" value="UniProtKB-SubCell"/>
</dbReference>
<dbReference type="GO" id="GO:0016151">
    <property type="term" value="F:nickel cation binding"/>
    <property type="evidence" value="ECO:0007669"/>
    <property type="project" value="UniProtKB-UniRule"/>
</dbReference>
<dbReference type="GO" id="GO:0009039">
    <property type="term" value="F:urease activity"/>
    <property type="evidence" value="ECO:0007669"/>
    <property type="project" value="UniProtKB-UniRule"/>
</dbReference>
<dbReference type="GO" id="GO:0043419">
    <property type="term" value="P:urea catabolic process"/>
    <property type="evidence" value="ECO:0007669"/>
    <property type="project" value="UniProtKB-UniRule"/>
</dbReference>
<dbReference type="CDD" id="cd00375">
    <property type="entry name" value="Urease_alpha"/>
    <property type="match status" value="1"/>
</dbReference>
<dbReference type="Gene3D" id="3.20.20.140">
    <property type="entry name" value="Metal-dependent hydrolases"/>
    <property type="match status" value="1"/>
</dbReference>
<dbReference type="Gene3D" id="2.30.40.10">
    <property type="entry name" value="Urease, subunit C, domain 1"/>
    <property type="match status" value="1"/>
</dbReference>
<dbReference type="HAMAP" id="MF_01953">
    <property type="entry name" value="Urease_alpha"/>
    <property type="match status" value="1"/>
</dbReference>
<dbReference type="InterPro" id="IPR006680">
    <property type="entry name" value="Amidohydro-rel"/>
</dbReference>
<dbReference type="InterPro" id="IPR011059">
    <property type="entry name" value="Metal-dep_hydrolase_composite"/>
</dbReference>
<dbReference type="InterPro" id="IPR032466">
    <property type="entry name" value="Metal_Hydrolase"/>
</dbReference>
<dbReference type="InterPro" id="IPR011612">
    <property type="entry name" value="Urease_alpha_N_dom"/>
</dbReference>
<dbReference type="InterPro" id="IPR050112">
    <property type="entry name" value="Urease_alpha_subunit"/>
</dbReference>
<dbReference type="InterPro" id="IPR017950">
    <property type="entry name" value="Urease_AS"/>
</dbReference>
<dbReference type="InterPro" id="IPR005848">
    <property type="entry name" value="Urease_asu"/>
</dbReference>
<dbReference type="InterPro" id="IPR017951">
    <property type="entry name" value="Urease_asu_c"/>
</dbReference>
<dbReference type="InterPro" id="IPR029754">
    <property type="entry name" value="Urease_Ni-bd"/>
</dbReference>
<dbReference type="NCBIfam" id="NF009685">
    <property type="entry name" value="PRK13206.1"/>
    <property type="match status" value="1"/>
</dbReference>
<dbReference type="NCBIfam" id="NF009686">
    <property type="entry name" value="PRK13207.1"/>
    <property type="match status" value="1"/>
</dbReference>
<dbReference type="NCBIfam" id="TIGR01792">
    <property type="entry name" value="urease_alph"/>
    <property type="match status" value="1"/>
</dbReference>
<dbReference type="PANTHER" id="PTHR43440">
    <property type="entry name" value="UREASE"/>
    <property type="match status" value="1"/>
</dbReference>
<dbReference type="PANTHER" id="PTHR43440:SF1">
    <property type="entry name" value="UREASE"/>
    <property type="match status" value="1"/>
</dbReference>
<dbReference type="Pfam" id="PF01979">
    <property type="entry name" value="Amidohydro_1"/>
    <property type="match status" value="1"/>
</dbReference>
<dbReference type="Pfam" id="PF00449">
    <property type="entry name" value="Urease_alpha"/>
    <property type="match status" value="1"/>
</dbReference>
<dbReference type="PRINTS" id="PR01752">
    <property type="entry name" value="UREASE"/>
</dbReference>
<dbReference type="SUPFAM" id="SSF51338">
    <property type="entry name" value="Composite domain of metallo-dependent hydrolases"/>
    <property type="match status" value="2"/>
</dbReference>
<dbReference type="SUPFAM" id="SSF51556">
    <property type="entry name" value="Metallo-dependent hydrolases"/>
    <property type="match status" value="1"/>
</dbReference>
<dbReference type="PROSITE" id="PS01120">
    <property type="entry name" value="UREASE_1"/>
    <property type="match status" value="1"/>
</dbReference>
<dbReference type="PROSITE" id="PS00145">
    <property type="entry name" value="UREASE_2"/>
    <property type="match status" value="1"/>
</dbReference>
<dbReference type="PROSITE" id="PS51368">
    <property type="entry name" value="UREASE_3"/>
    <property type="match status" value="1"/>
</dbReference>
<evidence type="ECO:0000255" key="1">
    <source>
        <dbReference type="HAMAP-Rule" id="MF_01953"/>
    </source>
</evidence>
<feature type="chain" id="PRO_1000216199" description="Urease subunit alpha">
    <location>
        <begin position="1"/>
        <end position="567"/>
    </location>
</feature>
<feature type="domain" description="Urease" evidence="1">
    <location>
        <begin position="129"/>
        <end position="567"/>
    </location>
</feature>
<feature type="active site" description="Proton donor" evidence="1">
    <location>
        <position position="320"/>
    </location>
</feature>
<feature type="binding site" evidence="1">
    <location>
        <position position="134"/>
    </location>
    <ligand>
        <name>Ni(2+)</name>
        <dbReference type="ChEBI" id="CHEBI:49786"/>
        <label>1</label>
    </ligand>
</feature>
<feature type="binding site" evidence="1">
    <location>
        <position position="136"/>
    </location>
    <ligand>
        <name>Ni(2+)</name>
        <dbReference type="ChEBI" id="CHEBI:49786"/>
        <label>1</label>
    </ligand>
</feature>
<feature type="binding site" description="via carbamate group" evidence="1">
    <location>
        <position position="217"/>
    </location>
    <ligand>
        <name>Ni(2+)</name>
        <dbReference type="ChEBI" id="CHEBI:49786"/>
        <label>1</label>
    </ligand>
</feature>
<feature type="binding site" description="via carbamate group" evidence="1">
    <location>
        <position position="217"/>
    </location>
    <ligand>
        <name>Ni(2+)</name>
        <dbReference type="ChEBI" id="CHEBI:49786"/>
        <label>2</label>
    </ligand>
</feature>
<feature type="binding site" evidence="1">
    <location>
        <position position="219"/>
    </location>
    <ligand>
        <name>substrate</name>
    </ligand>
</feature>
<feature type="binding site" evidence="1">
    <location>
        <position position="246"/>
    </location>
    <ligand>
        <name>Ni(2+)</name>
        <dbReference type="ChEBI" id="CHEBI:49786"/>
        <label>2</label>
    </ligand>
</feature>
<feature type="binding site" evidence="1">
    <location>
        <position position="272"/>
    </location>
    <ligand>
        <name>Ni(2+)</name>
        <dbReference type="ChEBI" id="CHEBI:49786"/>
        <label>2</label>
    </ligand>
</feature>
<feature type="binding site" evidence="1">
    <location>
        <position position="360"/>
    </location>
    <ligand>
        <name>Ni(2+)</name>
        <dbReference type="ChEBI" id="CHEBI:49786"/>
        <label>1</label>
    </ligand>
</feature>
<feature type="modified residue" description="N6-carboxylysine" evidence="1">
    <location>
        <position position="217"/>
    </location>
</feature>
<name>URE1_TERTT</name>
<comment type="catalytic activity">
    <reaction evidence="1">
        <text>urea + 2 H2O + H(+) = hydrogencarbonate + 2 NH4(+)</text>
        <dbReference type="Rhea" id="RHEA:20557"/>
        <dbReference type="ChEBI" id="CHEBI:15377"/>
        <dbReference type="ChEBI" id="CHEBI:15378"/>
        <dbReference type="ChEBI" id="CHEBI:16199"/>
        <dbReference type="ChEBI" id="CHEBI:17544"/>
        <dbReference type="ChEBI" id="CHEBI:28938"/>
        <dbReference type="EC" id="3.5.1.5"/>
    </reaction>
</comment>
<comment type="cofactor">
    <cofactor evidence="1">
        <name>Ni cation</name>
        <dbReference type="ChEBI" id="CHEBI:25516"/>
    </cofactor>
    <text evidence="1">Binds 2 nickel ions per subunit.</text>
</comment>
<comment type="pathway">
    <text evidence="1">Nitrogen metabolism; urea degradation; CO(2) and NH(3) from urea (urease route): step 1/1.</text>
</comment>
<comment type="subunit">
    <text evidence="1">Heterotrimer of UreA (gamma), UreB (beta) and UreC (alpha) subunits. Three heterotrimers associate to form the active enzyme.</text>
</comment>
<comment type="subcellular location">
    <subcellularLocation>
        <location evidence="1">Cytoplasm</location>
    </subcellularLocation>
</comment>
<comment type="PTM">
    <text evidence="1">Carboxylation allows a single lysine to coordinate two nickel ions.</text>
</comment>
<comment type="similarity">
    <text evidence="1">Belongs to the metallo-dependent hydrolases superfamily. Urease alpha subunit family.</text>
</comment>
<accession>C5BUN9</accession>
<gene>
    <name evidence="1" type="primary">ureC</name>
    <name type="ordered locus">TERTU_4206</name>
</gene>
<keyword id="KW-0963">Cytoplasm</keyword>
<keyword id="KW-0378">Hydrolase</keyword>
<keyword id="KW-0479">Metal-binding</keyword>
<keyword id="KW-0533">Nickel</keyword>
<keyword id="KW-1185">Reference proteome</keyword>
<sequence>MSKIDRKAYADMFGPTVGDRVRLADTELWIEVEKDFTIYGEEVKFGGGKVIRDGMGQSQASCADTPDTVITNALILDHWGIVKADVAIKNGRIATIGKAGNPDIQPGVTIEVGPGTEVIAGEGQILTAGGIDAHIHFICPQQIEEALTSGVTTMIGGGTGPATGTNATTCTPGPWHIQKMLQAGEAFPMNLGFLAKGNASLPTALNEQVEAGALGLKLHEDWGTTPAAIDCCLTVAENYDVQVAIHTDTLNESGFVEDTLAAFKDRTIHTYHTEGAGGGHAPDIIKACGSDNVLPSSTNPTRPYTVNTVDEHLDMLMVCHHLDPNIPEDVAFADSRIRKETIAAEDILHDLGAFSMISSDSQAMGRVGEVVCRTWQTAHKMKVQRGPLAEDSSYSDNFRARRYIAKYTINPALAHGIAHEVGSVEVGKLADLVLWKPAFFGVKPSLIIKGGAIAAAPMGDPNASIPTPQPVHYRHMFGAFGRACTGTSVSFVSQAALDAGIAASYQLERRLVAVKNCRSVKKKDMVLNHYQPVMEVDPETYEVRADGQLLTCEPAEVLPMAQRYFLF</sequence>